<name>RR15_CALFG</name>
<reference key="1">
    <citation type="journal article" date="2003" name="Plant Syst. Evol.">
        <title>The chloroplast genome of the 'basal' angiosperm Calycanthus fertilis -- structural and phylogenetic analyses.</title>
        <authorList>
            <person name="Goremykin V."/>
            <person name="Hirsch-Ernst K.I."/>
            <person name="Woelfl S."/>
            <person name="Hellwig F.H."/>
        </authorList>
    </citation>
    <scope>NUCLEOTIDE SEQUENCE [LARGE SCALE GENOMIC DNA]</scope>
</reference>
<protein>
    <recommendedName>
        <fullName evidence="2">Small ribosomal subunit protein uS15c</fullName>
    </recommendedName>
    <alternativeName>
        <fullName>30S ribosomal protein S15, chloroplastic</fullName>
    </alternativeName>
</protein>
<keyword id="KW-0150">Chloroplast</keyword>
<keyword id="KW-0934">Plastid</keyword>
<keyword id="KW-0687">Ribonucleoprotein</keyword>
<keyword id="KW-0689">Ribosomal protein</keyword>
<accession>Q7YJS7</accession>
<dbReference type="EMBL" id="AJ428413">
    <property type="protein sequence ID" value="CAD28779.1"/>
    <property type="molecule type" value="Genomic_DNA"/>
</dbReference>
<dbReference type="RefSeq" id="NP_862812.1">
    <property type="nucleotide sequence ID" value="NC_004993.1"/>
</dbReference>
<dbReference type="SMR" id="Q7YJS7"/>
<dbReference type="GeneID" id="2598039"/>
<dbReference type="GO" id="GO:0009507">
    <property type="term" value="C:chloroplast"/>
    <property type="evidence" value="ECO:0007669"/>
    <property type="project" value="UniProtKB-SubCell"/>
</dbReference>
<dbReference type="GO" id="GO:1990904">
    <property type="term" value="C:ribonucleoprotein complex"/>
    <property type="evidence" value="ECO:0007669"/>
    <property type="project" value="UniProtKB-KW"/>
</dbReference>
<dbReference type="GO" id="GO:0005840">
    <property type="term" value="C:ribosome"/>
    <property type="evidence" value="ECO:0007669"/>
    <property type="project" value="UniProtKB-KW"/>
</dbReference>
<dbReference type="GO" id="GO:0003735">
    <property type="term" value="F:structural constituent of ribosome"/>
    <property type="evidence" value="ECO:0007669"/>
    <property type="project" value="InterPro"/>
</dbReference>
<dbReference type="GO" id="GO:0006412">
    <property type="term" value="P:translation"/>
    <property type="evidence" value="ECO:0007669"/>
    <property type="project" value="UniProtKB-UniRule"/>
</dbReference>
<dbReference type="CDD" id="cd00353">
    <property type="entry name" value="Ribosomal_S15p_S13e"/>
    <property type="match status" value="1"/>
</dbReference>
<dbReference type="Gene3D" id="1.10.287.10">
    <property type="entry name" value="S15/NS1, RNA-binding"/>
    <property type="match status" value="1"/>
</dbReference>
<dbReference type="HAMAP" id="MF_01343_B">
    <property type="entry name" value="Ribosomal_uS15_B"/>
    <property type="match status" value="1"/>
</dbReference>
<dbReference type="InterPro" id="IPR000589">
    <property type="entry name" value="Ribosomal_uS15"/>
</dbReference>
<dbReference type="InterPro" id="IPR005290">
    <property type="entry name" value="Ribosomal_uS15_bac-type"/>
</dbReference>
<dbReference type="InterPro" id="IPR009068">
    <property type="entry name" value="uS15_NS1_RNA-bd_sf"/>
</dbReference>
<dbReference type="NCBIfam" id="TIGR00952">
    <property type="entry name" value="S15_bact"/>
    <property type="match status" value="1"/>
</dbReference>
<dbReference type="PANTHER" id="PTHR23321">
    <property type="entry name" value="RIBOSOMAL PROTEIN S15, BACTERIAL AND ORGANELLAR"/>
    <property type="match status" value="1"/>
</dbReference>
<dbReference type="PANTHER" id="PTHR23321:SF26">
    <property type="entry name" value="SMALL RIBOSOMAL SUBUNIT PROTEIN US15M"/>
    <property type="match status" value="1"/>
</dbReference>
<dbReference type="Pfam" id="PF00312">
    <property type="entry name" value="Ribosomal_S15"/>
    <property type="match status" value="1"/>
</dbReference>
<dbReference type="SMART" id="SM01387">
    <property type="entry name" value="Ribosomal_S15"/>
    <property type="match status" value="1"/>
</dbReference>
<dbReference type="SUPFAM" id="SSF47060">
    <property type="entry name" value="S15/NS1 RNA-binding domain"/>
    <property type="match status" value="1"/>
</dbReference>
<dbReference type="PROSITE" id="PS00362">
    <property type="entry name" value="RIBOSOMAL_S15"/>
    <property type="match status" value="1"/>
</dbReference>
<proteinExistence type="inferred from homology"/>
<geneLocation type="chloroplast"/>
<organism>
    <name type="scientific">Calycanthus floridus var. glaucus</name>
    <name type="common">Eastern sweetshrub</name>
    <name type="synonym">Calycanthus fertilis var. ferax</name>
    <dbReference type="NCBI Taxonomy" id="212734"/>
    <lineage>
        <taxon>Eukaryota</taxon>
        <taxon>Viridiplantae</taxon>
        <taxon>Streptophyta</taxon>
        <taxon>Embryophyta</taxon>
        <taxon>Tracheophyta</taxon>
        <taxon>Spermatophyta</taxon>
        <taxon>Magnoliopsida</taxon>
        <taxon>Magnoliidae</taxon>
        <taxon>Laurales</taxon>
        <taxon>Calycanthaceae</taxon>
        <taxon>Calycanthus</taxon>
    </lineage>
</organism>
<comment type="subunit">
    <text evidence="1">Part of the 30S ribosomal subunit.</text>
</comment>
<comment type="subcellular location">
    <subcellularLocation>
        <location>Plastid</location>
        <location>Chloroplast</location>
    </subcellularLocation>
</comment>
<comment type="similarity">
    <text evidence="2">Belongs to the universal ribosomal protein uS15 family.</text>
</comment>
<gene>
    <name type="primary">rps15</name>
</gene>
<sequence length="88" mass="10488">MVKNSFISVIPQEEKNKGSVEFQVFSFTNKIRKLTSHLELHRKDYSSQIGLRRILGKRQRLLAYLSKKNRVRYKELIDQLGIREPKTR</sequence>
<evidence type="ECO:0000250" key="1"/>
<evidence type="ECO:0000305" key="2"/>
<feature type="chain" id="PRO_0000115630" description="Small ribosomal subunit protein uS15c">
    <location>
        <begin position="1"/>
        <end position="88"/>
    </location>
</feature>